<feature type="chain" id="PRO_0000362781" description="NADH-quinone oxidoreductase subunit A">
    <location>
        <begin position="1"/>
        <end position="147"/>
    </location>
</feature>
<feature type="transmembrane region" description="Helical" evidence="1">
    <location>
        <begin position="16"/>
        <end position="36"/>
    </location>
</feature>
<feature type="transmembrane region" description="Helical" evidence="1">
    <location>
        <begin position="68"/>
        <end position="88"/>
    </location>
</feature>
<feature type="transmembrane region" description="Helical" evidence="1">
    <location>
        <begin position="98"/>
        <end position="118"/>
    </location>
</feature>
<comment type="function">
    <text evidence="1">NDH-1 shuttles electrons from NADH, via FMN and iron-sulfur (Fe-S) centers, to quinones in the respiratory chain. The immediate electron acceptor for the enzyme in this species is believed to be ubiquinone. Couples the redox reaction to proton translocation (for every two electrons transferred, four hydrogen ions are translocated across the cytoplasmic membrane), and thus conserves the redox energy in a proton gradient.</text>
</comment>
<comment type="catalytic activity">
    <reaction evidence="1">
        <text>a quinone + NADH + 5 H(+)(in) = a quinol + NAD(+) + 4 H(+)(out)</text>
        <dbReference type="Rhea" id="RHEA:57888"/>
        <dbReference type="ChEBI" id="CHEBI:15378"/>
        <dbReference type="ChEBI" id="CHEBI:24646"/>
        <dbReference type="ChEBI" id="CHEBI:57540"/>
        <dbReference type="ChEBI" id="CHEBI:57945"/>
        <dbReference type="ChEBI" id="CHEBI:132124"/>
    </reaction>
</comment>
<comment type="subunit">
    <text evidence="1">NDH-1 is composed of 13 different subunits. Subunits NuoA, H, J, K, L, M, N constitute the membrane sector of the complex.</text>
</comment>
<comment type="subcellular location">
    <subcellularLocation>
        <location evidence="1">Cell inner membrane</location>
        <topology evidence="1">Multi-pass membrane protein</topology>
    </subcellularLocation>
</comment>
<comment type="similarity">
    <text evidence="1">Belongs to the complex I subunit 3 family.</text>
</comment>
<evidence type="ECO:0000255" key="1">
    <source>
        <dbReference type="HAMAP-Rule" id="MF_01394"/>
    </source>
</evidence>
<protein>
    <recommendedName>
        <fullName evidence="1">NADH-quinone oxidoreductase subunit A</fullName>
        <ecNumber evidence="1">7.1.1.-</ecNumber>
    </recommendedName>
    <alternativeName>
        <fullName evidence="1">NADH dehydrogenase I subunit A</fullName>
    </alternativeName>
    <alternativeName>
        <fullName evidence="1">NDH-1 subunit A</fullName>
    </alternativeName>
    <alternativeName>
        <fullName evidence="1">NUO1</fullName>
    </alternativeName>
</protein>
<keyword id="KW-0997">Cell inner membrane</keyword>
<keyword id="KW-1003">Cell membrane</keyword>
<keyword id="KW-0472">Membrane</keyword>
<keyword id="KW-0520">NAD</keyword>
<keyword id="KW-0874">Quinone</keyword>
<keyword id="KW-1278">Translocase</keyword>
<keyword id="KW-0812">Transmembrane</keyword>
<keyword id="KW-1133">Transmembrane helix</keyword>
<keyword id="KW-0813">Transport</keyword>
<keyword id="KW-0830">Ubiquinone</keyword>
<sequence>MSMSTSTEVIAHHWAFAIFLIVAIGLCCLMLVGGWFLGGRARARSKNVPFESGIDSVGSARLRLSAKFYLVAMFFVIFDVEALYLFAWSTSIRESGWVGFVEAAIFIFVLLAGLVYLVRIGALDWTPARSRRERMNPETNSIANRQR</sequence>
<name>NUOA_SHIF8</name>
<accession>Q0T2J9</accession>
<proteinExistence type="inferred from homology"/>
<reference key="1">
    <citation type="journal article" date="2006" name="BMC Genomics">
        <title>Complete genome sequence of Shigella flexneri 5b and comparison with Shigella flexneri 2a.</title>
        <authorList>
            <person name="Nie H."/>
            <person name="Yang F."/>
            <person name="Zhang X."/>
            <person name="Yang J."/>
            <person name="Chen L."/>
            <person name="Wang J."/>
            <person name="Xiong Z."/>
            <person name="Peng J."/>
            <person name="Sun L."/>
            <person name="Dong J."/>
            <person name="Xue Y."/>
            <person name="Xu X."/>
            <person name="Chen S."/>
            <person name="Yao Z."/>
            <person name="Shen Y."/>
            <person name="Jin Q."/>
        </authorList>
    </citation>
    <scope>NUCLEOTIDE SEQUENCE [LARGE SCALE GENOMIC DNA]</scope>
    <source>
        <strain>8401</strain>
    </source>
</reference>
<gene>
    <name evidence="1" type="primary">nuoA</name>
    <name type="ordered locus">SFV_2355</name>
</gene>
<organism>
    <name type="scientific">Shigella flexneri serotype 5b (strain 8401)</name>
    <dbReference type="NCBI Taxonomy" id="373384"/>
    <lineage>
        <taxon>Bacteria</taxon>
        <taxon>Pseudomonadati</taxon>
        <taxon>Pseudomonadota</taxon>
        <taxon>Gammaproteobacteria</taxon>
        <taxon>Enterobacterales</taxon>
        <taxon>Enterobacteriaceae</taxon>
        <taxon>Shigella</taxon>
    </lineage>
</organism>
<dbReference type="EC" id="7.1.1.-" evidence="1"/>
<dbReference type="EMBL" id="CP000266">
    <property type="protein sequence ID" value="ABF04466.1"/>
    <property type="molecule type" value="Genomic_DNA"/>
</dbReference>
<dbReference type="RefSeq" id="WP_000062997.1">
    <property type="nucleotide sequence ID" value="NC_008258.1"/>
</dbReference>
<dbReference type="SMR" id="Q0T2J9"/>
<dbReference type="GeneID" id="93774886"/>
<dbReference type="KEGG" id="sfv:SFV_2355"/>
<dbReference type="HOGENOM" id="CLU_119549_2_0_6"/>
<dbReference type="Proteomes" id="UP000000659">
    <property type="component" value="Chromosome"/>
</dbReference>
<dbReference type="GO" id="GO:0030964">
    <property type="term" value="C:NADH dehydrogenase complex"/>
    <property type="evidence" value="ECO:0007669"/>
    <property type="project" value="TreeGrafter"/>
</dbReference>
<dbReference type="GO" id="GO:0005886">
    <property type="term" value="C:plasma membrane"/>
    <property type="evidence" value="ECO:0007669"/>
    <property type="project" value="UniProtKB-SubCell"/>
</dbReference>
<dbReference type="GO" id="GO:0008137">
    <property type="term" value="F:NADH dehydrogenase (ubiquinone) activity"/>
    <property type="evidence" value="ECO:0007669"/>
    <property type="project" value="InterPro"/>
</dbReference>
<dbReference type="GO" id="GO:0050136">
    <property type="term" value="F:NADH:ubiquinone reductase (non-electrogenic) activity"/>
    <property type="evidence" value="ECO:0007669"/>
    <property type="project" value="UniProtKB-UniRule"/>
</dbReference>
<dbReference type="GO" id="GO:0048038">
    <property type="term" value="F:quinone binding"/>
    <property type="evidence" value="ECO:0007669"/>
    <property type="project" value="UniProtKB-KW"/>
</dbReference>
<dbReference type="FunFam" id="1.20.58.1610:FF:000003">
    <property type="entry name" value="NADH-quinone oxidoreductase subunit A"/>
    <property type="match status" value="1"/>
</dbReference>
<dbReference type="Gene3D" id="1.20.58.1610">
    <property type="entry name" value="NADH:ubiquinone/plastoquinone oxidoreductase, chain 3"/>
    <property type="match status" value="1"/>
</dbReference>
<dbReference type="HAMAP" id="MF_01394">
    <property type="entry name" value="NDH1_NuoA"/>
    <property type="match status" value="1"/>
</dbReference>
<dbReference type="InterPro" id="IPR023043">
    <property type="entry name" value="NAD(P)H_OxRDtase_bac/plastid"/>
</dbReference>
<dbReference type="InterPro" id="IPR000440">
    <property type="entry name" value="NADH_UbQ/plastoQ_OxRdtase_su3"/>
</dbReference>
<dbReference type="InterPro" id="IPR038430">
    <property type="entry name" value="NDAH_ubi_oxred_su3_sf"/>
</dbReference>
<dbReference type="PANTHER" id="PTHR11058:SF21">
    <property type="entry name" value="NADH-QUINONE OXIDOREDUCTASE SUBUNIT A"/>
    <property type="match status" value="1"/>
</dbReference>
<dbReference type="PANTHER" id="PTHR11058">
    <property type="entry name" value="NADH-UBIQUINONE OXIDOREDUCTASE CHAIN 3"/>
    <property type="match status" value="1"/>
</dbReference>
<dbReference type="Pfam" id="PF00507">
    <property type="entry name" value="Oxidored_q4"/>
    <property type="match status" value="1"/>
</dbReference>